<accession>C5A7F5</accession>
<reference key="1">
    <citation type="journal article" date="2007" name="Genome Biol.">
        <title>Genome analysis and genome-wide proteomics of Thermococcus gammatolerans, the most radioresistant organism known amongst the Archaea.</title>
        <authorList>
            <person name="Zivanovic Y."/>
            <person name="Armengaud J."/>
            <person name="Lagorce A."/>
            <person name="Leplat C."/>
            <person name="Guerin P."/>
            <person name="Dutertre M."/>
            <person name="Anthouard V."/>
            <person name="Forterre P."/>
            <person name="Wincker P."/>
            <person name="Confalonieri F."/>
        </authorList>
    </citation>
    <scope>NUCLEOTIDE SEQUENCE [LARGE SCALE GENOMIC DNA]</scope>
    <source>
        <strain>DSM 15229 / JCM 11827 / EJ3</strain>
    </source>
</reference>
<comment type="function">
    <text evidence="1">Specifically catalyzes the N1-methylation of pseudouridine at position 54 (Psi54) in tRNAs.</text>
</comment>
<comment type="catalytic activity">
    <reaction evidence="1">
        <text>pseudouridine(54) in tRNA + S-adenosyl-L-methionine = N(1)-methylpseudouridine(54) in tRNA + S-adenosyl-L-homocysteine + H(+)</text>
        <dbReference type="Rhea" id="RHEA:55292"/>
        <dbReference type="Rhea" id="RHEA-COMP:14140"/>
        <dbReference type="Rhea" id="RHEA-COMP:14141"/>
        <dbReference type="ChEBI" id="CHEBI:15378"/>
        <dbReference type="ChEBI" id="CHEBI:57856"/>
        <dbReference type="ChEBI" id="CHEBI:59789"/>
        <dbReference type="ChEBI" id="CHEBI:65314"/>
        <dbReference type="ChEBI" id="CHEBI:74890"/>
        <dbReference type="EC" id="2.1.1.257"/>
    </reaction>
</comment>
<comment type="subunit">
    <text evidence="1">Homodimer.</text>
</comment>
<comment type="subcellular location">
    <subcellularLocation>
        <location evidence="1">Cytoplasm</location>
    </subcellularLocation>
</comment>
<comment type="similarity">
    <text evidence="1">Belongs to the methyltransferase superfamily. TrmY family.</text>
</comment>
<name>TRMY_THEGJ</name>
<sequence length="202" mass="22741">MRTFIIKANEAHTRPDFKLNDLPGTSGRIDVLCRFLNSAFLLSHGFRKNVRVWLLLYGPPEPPKAIRFEGSRLKVRLNPDERSTARLIVKALKAGGGLREPGKEVEVYPGLYVSNRTFEDVVRLTLKNSAIYYLHEEGRPITDIRFPQNVAFVLGDHKGLSPEDEAFLDGIAERVSVGRKSYLASHVVAYINIFLDSLPNPP</sequence>
<gene>
    <name evidence="1" type="primary">trmY</name>
    <name type="ordered locus">TGAM_1665</name>
</gene>
<proteinExistence type="inferred from homology"/>
<keyword id="KW-0963">Cytoplasm</keyword>
<keyword id="KW-0489">Methyltransferase</keyword>
<keyword id="KW-1185">Reference proteome</keyword>
<keyword id="KW-0949">S-adenosyl-L-methionine</keyword>
<keyword id="KW-0808">Transferase</keyword>
<keyword id="KW-0819">tRNA processing</keyword>
<feature type="chain" id="PRO_1000212155" description="tRNA (pseudouridine(54)-N(1))-methyltransferase">
    <location>
        <begin position="1"/>
        <end position="202"/>
    </location>
</feature>
<feature type="binding site" evidence="1">
    <location>
        <position position="134"/>
    </location>
    <ligand>
        <name>S-adenosyl-L-methionine</name>
        <dbReference type="ChEBI" id="CHEBI:59789"/>
    </ligand>
</feature>
<feature type="binding site" evidence="1">
    <location>
        <position position="155"/>
    </location>
    <ligand>
        <name>S-adenosyl-L-methionine</name>
        <dbReference type="ChEBI" id="CHEBI:59789"/>
    </ligand>
</feature>
<evidence type="ECO:0000255" key="1">
    <source>
        <dbReference type="HAMAP-Rule" id="MF_00587"/>
    </source>
</evidence>
<dbReference type="EC" id="2.1.1.257" evidence="1"/>
<dbReference type="EMBL" id="CP001398">
    <property type="protein sequence ID" value="ACS34167.1"/>
    <property type="molecule type" value="Genomic_DNA"/>
</dbReference>
<dbReference type="RefSeq" id="WP_015859278.1">
    <property type="nucleotide sequence ID" value="NC_012804.1"/>
</dbReference>
<dbReference type="SMR" id="C5A7F5"/>
<dbReference type="STRING" id="593117.TGAM_1665"/>
<dbReference type="PaxDb" id="593117-TGAM_1665"/>
<dbReference type="GeneID" id="7987575"/>
<dbReference type="KEGG" id="tga:TGAM_1665"/>
<dbReference type="PATRIC" id="fig|593117.10.peg.1671"/>
<dbReference type="eggNOG" id="arCOG01239">
    <property type="taxonomic scope" value="Archaea"/>
</dbReference>
<dbReference type="HOGENOM" id="CLU_107018_0_0_2"/>
<dbReference type="OrthoDB" id="27492at2157"/>
<dbReference type="Proteomes" id="UP000001488">
    <property type="component" value="Chromosome"/>
</dbReference>
<dbReference type="GO" id="GO:0005737">
    <property type="term" value="C:cytoplasm"/>
    <property type="evidence" value="ECO:0007669"/>
    <property type="project" value="UniProtKB-SubCell"/>
</dbReference>
<dbReference type="GO" id="GO:0008757">
    <property type="term" value="F:S-adenosylmethionine-dependent methyltransferase activity"/>
    <property type="evidence" value="ECO:0007669"/>
    <property type="project" value="UniProtKB-UniRule"/>
</dbReference>
<dbReference type="GO" id="GO:0008175">
    <property type="term" value="F:tRNA methyltransferase activity"/>
    <property type="evidence" value="ECO:0007669"/>
    <property type="project" value="UniProtKB-UniRule"/>
</dbReference>
<dbReference type="GO" id="GO:0030488">
    <property type="term" value="P:tRNA methylation"/>
    <property type="evidence" value="ECO:0007669"/>
    <property type="project" value="UniProtKB-UniRule"/>
</dbReference>
<dbReference type="CDD" id="cd18087">
    <property type="entry name" value="TrmY-like"/>
    <property type="match status" value="1"/>
</dbReference>
<dbReference type="Gene3D" id="3.40.1280.10">
    <property type="match status" value="1"/>
</dbReference>
<dbReference type="HAMAP" id="MF_00587">
    <property type="entry name" value="tRNA_methyltr_TrmY"/>
    <property type="match status" value="1"/>
</dbReference>
<dbReference type="InterPro" id="IPR029028">
    <property type="entry name" value="Alpha/beta_knot_MTases"/>
</dbReference>
<dbReference type="InterPro" id="IPR007158">
    <property type="entry name" value="TrmY"/>
</dbReference>
<dbReference type="InterPro" id="IPR029026">
    <property type="entry name" value="tRNA_m1G_MTases_N"/>
</dbReference>
<dbReference type="NCBIfam" id="NF002560">
    <property type="entry name" value="PRK02135.1"/>
    <property type="match status" value="1"/>
</dbReference>
<dbReference type="PANTHER" id="PTHR40703">
    <property type="entry name" value="TRNA (PSEUDOURIDINE(54)-N(1))-METHYLTRANSFERASE"/>
    <property type="match status" value="1"/>
</dbReference>
<dbReference type="PANTHER" id="PTHR40703:SF1">
    <property type="entry name" value="TRNA (PSEUDOURIDINE(54)-N(1))-METHYLTRANSFERASE"/>
    <property type="match status" value="1"/>
</dbReference>
<dbReference type="Pfam" id="PF04013">
    <property type="entry name" value="Methyltrn_RNA_2"/>
    <property type="match status" value="1"/>
</dbReference>
<dbReference type="SUPFAM" id="SSF75217">
    <property type="entry name" value="alpha/beta knot"/>
    <property type="match status" value="1"/>
</dbReference>
<organism>
    <name type="scientific">Thermococcus gammatolerans (strain DSM 15229 / JCM 11827 / EJ3)</name>
    <dbReference type="NCBI Taxonomy" id="593117"/>
    <lineage>
        <taxon>Archaea</taxon>
        <taxon>Methanobacteriati</taxon>
        <taxon>Methanobacteriota</taxon>
        <taxon>Thermococci</taxon>
        <taxon>Thermococcales</taxon>
        <taxon>Thermococcaceae</taxon>
        <taxon>Thermococcus</taxon>
    </lineage>
</organism>
<protein>
    <recommendedName>
        <fullName evidence="1">tRNA (pseudouridine(54)-N(1))-methyltransferase</fullName>
        <ecNumber evidence="1">2.1.1.257</ecNumber>
    </recommendedName>
</protein>